<organism>
    <name type="scientific">Kineococcus radiotolerans (strain ATCC BAA-149 / DSM 14245 / SRS30216)</name>
    <dbReference type="NCBI Taxonomy" id="266940"/>
    <lineage>
        <taxon>Bacteria</taxon>
        <taxon>Bacillati</taxon>
        <taxon>Actinomycetota</taxon>
        <taxon>Actinomycetes</taxon>
        <taxon>Kineosporiales</taxon>
        <taxon>Kineosporiaceae</taxon>
        <taxon>Kineococcus</taxon>
    </lineage>
</organism>
<sequence>MNLLDNVDAASLRTDVPDFRAGDTLNVHVKVVEGNRSRVQVFKGIVIRRTGGGIREAFTVRKVSFGVGVERTFPLHTPIIDKIEVVTRGDVKRAKLYYLRDLRGKAAKIKERREPRG</sequence>
<reference key="1">
    <citation type="journal article" date="2008" name="PLoS ONE">
        <title>Survival in nuclear waste, extreme resistance, and potential applications gleaned from the genome sequence of Kineococcus radiotolerans SRS30216.</title>
        <authorList>
            <person name="Bagwell C.E."/>
            <person name="Bhat S."/>
            <person name="Hawkins G.M."/>
            <person name="Smith B.W."/>
            <person name="Biswas T."/>
            <person name="Hoover T.R."/>
            <person name="Saunders E."/>
            <person name="Han C.S."/>
            <person name="Tsodikov O.V."/>
            <person name="Shimkets L.J."/>
        </authorList>
    </citation>
    <scope>NUCLEOTIDE SEQUENCE [LARGE SCALE GENOMIC DNA]</scope>
    <source>
        <strain>ATCC BAA-149 / DSM 14245 / SRS30216</strain>
    </source>
</reference>
<evidence type="ECO:0000255" key="1">
    <source>
        <dbReference type="HAMAP-Rule" id="MF_00402"/>
    </source>
</evidence>
<evidence type="ECO:0000305" key="2"/>
<gene>
    <name evidence="1" type="primary">rplS</name>
    <name type="ordered locus">Krad_1402</name>
</gene>
<comment type="function">
    <text evidence="1">This protein is located at the 30S-50S ribosomal subunit interface and may play a role in the structure and function of the aminoacyl-tRNA binding site.</text>
</comment>
<comment type="similarity">
    <text evidence="1">Belongs to the bacterial ribosomal protein bL19 family.</text>
</comment>
<accession>A6W7V1</accession>
<proteinExistence type="inferred from homology"/>
<protein>
    <recommendedName>
        <fullName evidence="1">Large ribosomal subunit protein bL19</fullName>
    </recommendedName>
    <alternativeName>
        <fullName evidence="2">50S ribosomal protein L19</fullName>
    </alternativeName>
</protein>
<feature type="chain" id="PRO_1000080356" description="Large ribosomal subunit protein bL19">
    <location>
        <begin position="1"/>
        <end position="117"/>
    </location>
</feature>
<name>RL19_KINRD</name>
<dbReference type="EMBL" id="CP000750">
    <property type="protein sequence ID" value="ABS02890.1"/>
    <property type="molecule type" value="Genomic_DNA"/>
</dbReference>
<dbReference type="RefSeq" id="WP_011981971.1">
    <property type="nucleotide sequence ID" value="NC_009664.2"/>
</dbReference>
<dbReference type="SMR" id="A6W7V1"/>
<dbReference type="STRING" id="266940.Krad_1402"/>
<dbReference type="KEGG" id="kra:Krad_1402"/>
<dbReference type="eggNOG" id="COG0335">
    <property type="taxonomic scope" value="Bacteria"/>
</dbReference>
<dbReference type="HOGENOM" id="CLU_103507_2_1_11"/>
<dbReference type="OrthoDB" id="9803541at2"/>
<dbReference type="Proteomes" id="UP000001116">
    <property type="component" value="Chromosome"/>
</dbReference>
<dbReference type="GO" id="GO:0022625">
    <property type="term" value="C:cytosolic large ribosomal subunit"/>
    <property type="evidence" value="ECO:0007669"/>
    <property type="project" value="TreeGrafter"/>
</dbReference>
<dbReference type="GO" id="GO:0003735">
    <property type="term" value="F:structural constituent of ribosome"/>
    <property type="evidence" value="ECO:0007669"/>
    <property type="project" value="InterPro"/>
</dbReference>
<dbReference type="GO" id="GO:0006412">
    <property type="term" value="P:translation"/>
    <property type="evidence" value="ECO:0007669"/>
    <property type="project" value="UniProtKB-UniRule"/>
</dbReference>
<dbReference type="FunFam" id="2.30.30.790:FF:000001">
    <property type="entry name" value="50S ribosomal protein L19"/>
    <property type="match status" value="1"/>
</dbReference>
<dbReference type="Gene3D" id="2.30.30.790">
    <property type="match status" value="1"/>
</dbReference>
<dbReference type="HAMAP" id="MF_00402">
    <property type="entry name" value="Ribosomal_bL19"/>
    <property type="match status" value="1"/>
</dbReference>
<dbReference type="InterPro" id="IPR001857">
    <property type="entry name" value="Ribosomal_bL19"/>
</dbReference>
<dbReference type="InterPro" id="IPR018257">
    <property type="entry name" value="Ribosomal_bL19_CS"/>
</dbReference>
<dbReference type="InterPro" id="IPR038657">
    <property type="entry name" value="Ribosomal_bL19_sf"/>
</dbReference>
<dbReference type="InterPro" id="IPR008991">
    <property type="entry name" value="Translation_prot_SH3-like_sf"/>
</dbReference>
<dbReference type="NCBIfam" id="TIGR01024">
    <property type="entry name" value="rplS_bact"/>
    <property type="match status" value="1"/>
</dbReference>
<dbReference type="PANTHER" id="PTHR15680:SF9">
    <property type="entry name" value="LARGE RIBOSOMAL SUBUNIT PROTEIN BL19M"/>
    <property type="match status" value="1"/>
</dbReference>
<dbReference type="PANTHER" id="PTHR15680">
    <property type="entry name" value="RIBOSOMAL PROTEIN L19"/>
    <property type="match status" value="1"/>
</dbReference>
<dbReference type="Pfam" id="PF01245">
    <property type="entry name" value="Ribosomal_L19"/>
    <property type="match status" value="1"/>
</dbReference>
<dbReference type="PIRSF" id="PIRSF002191">
    <property type="entry name" value="Ribosomal_L19"/>
    <property type="match status" value="1"/>
</dbReference>
<dbReference type="PRINTS" id="PR00061">
    <property type="entry name" value="RIBOSOMALL19"/>
</dbReference>
<dbReference type="SUPFAM" id="SSF50104">
    <property type="entry name" value="Translation proteins SH3-like domain"/>
    <property type="match status" value="1"/>
</dbReference>
<dbReference type="PROSITE" id="PS01015">
    <property type="entry name" value="RIBOSOMAL_L19"/>
    <property type="match status" value="1"/>
</dbReference>
<keyword id="KW-1185">Reference proteome</keyword>
<keyword id="KW-0687">Ribonucleoprotein</keyword>
<keyword id="KW-0689">Ribosomal protein</keyword>